<proteinExistence type="inferred from homology"/>
<accession>P94695</accession>
<accession>F0RMA1</accession>
<protein>
    <recommendedName>
        <fullName>Chaperone protein DnaK</fullName>
    </recommendedName>
    <alternativeName>
        <fullName>HSP70</fullName>
    </alternativeName>
    <alternativeName>
        <fullName>Heat shock 70 kDa protein</fullName>
    </alternativeName>
    <alternativeName>
        <fullName>Heat shock protein 70</fullName>
    </alternativeName>
</protein>
<name>DNAK_DEIPM</name>
<keyword id="KW-0067">ATP-binding</keyword>
<keyword id="KW-0143">Chaperone</keyword>
<keyword id="KW-0547">Nucleotide-binding</keyword>
<keyword id="KW-0597">Phosphoprotein</keyword>
<keyword id="KW-1185">Reference proteome</keyword>
<keyword id="KW-0346">Stress response</keyword>
<reference key="1">
    <citation type="submission" date="2011-02" db="EMBL/GenBank/DDBJ databases">
        <title>The complete sequence of chromosome of Deinococcus proteolyticus DSM 20540.</title>
        <authorList>
            <consortium name="US DOE Joint Genome Institute (JGI-PGF)"/>
            <person name="Lucas S."/>
            <person name="Copeland A."/>
            <person name="Lapidus A."/>
            <person name="Bruce D."/>
            <person name="Goodwin L."/>
            <person name="Pitluck S."/>
            <person name="Kyrpides N."/>
            <person name="Mavromatis K."/>
            <person name="Pagani I."/>
            <person name="Ivanova N."/>
            <person name="Ovchinnikova G."/>
            <person name="Zeytun A."/>
            <person name="Detter J.C."/>
            <person name="Han C."/>
            <person name="Land M."/>
            <person name="Hauser L."/>
            <person name="Markowitz V."/>
            <person name="Cheng J.-F."/>
            <person name="Hugenholtz P."/>
            <person name="Woyke T."/>
            <person name="Wu D."/>
            <person name="Pukall R."/>
            <person name="Steenblock K."/>
            <person name="Brambilla E."/>
            <person name="Klenk H.-P."/>
            <person name="Eisen J.A."/>
        </authorList>
    </citation>
    <scope>NUCLEOTIDE SEQUENCE [LARGE SCALE GENOMIC DNA]</scope>
    <source>
        <strain>ATCC 35074 / DSM 20540 / JCM 6276 / NBRC 101906 / NCIMB 13154 / VKM Ac-1939 / CCM 2703 / MRP</strain>
    </source>
</reference>
<reference key="2">
    <citation type="journal article" date="1997" name="J. Bacteriol.">
        <title>Sequencing of heat shock protein 70 (DnaK) homologs from Deinococcus proteolyticus and Thermomicrobium roseum and their integration in a protein-based phylogeny of prokaryotes.</title>
        <authorList>
            <person name="Gupta R.S."/>
            <person name="Bustard K."/>
            <person name="Falah M."/>
            <person name="Singh D."/>
        </authorList>
    </citation>
    <scope>NUCLEOTIDE SEQUENCE [GENOMIC DNA] OF 12-631</scope>
    <source>
        <strain>ATCC 35074 / DSM 20540 / JCM 6276 / NBRC 101906 / NCIMB 13154 / VKM Ac-1939 / CCM 2703 / MRP</strain>
    </source>
</reference>
<evidence type="ECO:0000250" key="1"/>
<evidence type="ECO:0000256" key="2">
    <source>
        <dbReference type="SAM" id="MobiDB-lite"/>
    </source>
</evidence>
<evidence type="ECO:0000305" key="3"/>
<dbReference type="EMBL" id="CP002536">
    <property type="protein sequence ID" value="ADY27038.1"/>
    <property type="molecule type" value="Genomic_DNA"/>
</dbReference>
<dbReference type="EMBL" id="U80215">
    <property type="protein sequence ID" value="AAB41739.1"/>
    <property type="molecule type" value="Genomic_DNA"/>
</dbReference>
<dbReference type="RefSeq" id="WP_013615646.1">
    <property type="nucleotide sequence ID" value="NC_015161.1"/>
</dbReference>
<dbReference type="SMR" id="P94695"/>
<dbReference type="STRING" id="693977.Deipr_1906"/>
<dbReference type="KEGG" id="dpt:Deipr_1906"/>
<dbReference type="eggNOG" id="COG0443">
    <property type="taxonomic scope" value="Bacteria"/>
</dbReference>
<dbReference type="HOGENOM" id="CLU_005965_2_1_0"/>
<dbReference type="OrthoDB" id="9766019at2"/>
<dbReference type="Proteomes" id="UP000007718">
    <property type="component" value="Chromosome"/>
</dbReference>
<dbReference type="GO" id="GO:0005524">
    <property type="term" value="F:ATP binding"/>
    <property type="evidence" value="ECO:0007669"/>
    <property type="project" value="UniProtKB-UniRule"/>
</dbReference>
<dbReference type="GO" id="GO:0140662">
    <property type="term" value="F:ATP-dependent protein folding chaperone"/>
    <property type="evidence" value="ECO:0007669"/>
    <property type="project" value="InterPro"/>
</dbReference>
<dbReference type="GO" id="GO:0051082">
    <property type="term" value="F:unfolded protein binding"/>
    <property type="evidence" value="ECO:0007669"/>
    <property type="project" value="InterPro"/>
</dbReference>
<dbReference type="CDD" id="cd10234">
    <property type="entry name" value="ASKHA_NBD_HSP70_DnaK-like"/>
    <property type="match status" value="1"/>
</dbReference>
<dbReference type="FunFam" id="2.60.34.10:FF:000014">
    <property type="entry name" value="Chaperone protein DnaK HSP70"/>
    <property type="match status" value="1"/>
</dbReference>
<dbReference type="FunFam" id="3.30.420.40:FF:000004">
    <property type="entry name" value="Molecular chaperone DnaK"/>
    <property type="match status" value="1"/>
</dbReference>
<dbReference type="FunFam" id="3.90.640.10:FF:000003">
    <property type="entry name" value="Molecular chaperone DnaK"/>
    <property type="match status" value="1"/>
</dbReference>
<dbReference type="Gene3D" id="3.30.420.40">
    <property type="match status" value="2"/>
</dbReference>
<dbReference type="Gene3D" id="3.90.640.10">
    <property type="entry name" value="Actin, Chain A, domain 4"/>
    <property type="match status" value="1"/>
</dbReference>
<dbReference type="Gene3D" id="2.60.34.10">
    <property type="entry name" value="Substrate Binding Domain Of DNAk, Chain A, domain 1"/>
    <property type="match status" value="1"/>
</dbReference>
<dbReference type="HAMAP" id="MF_00332">
    <property type="entry name" value="DnaK"/>
    <property type="match status" value="1"/>
</dbReference>
<dbReference type="InterPro" id="IPR043129">
    <property type="entry name" value="ATPase_NBD"/>
</dbReference>
<dbReference type="InterPro" id="IPR012725">
    <property type="entry name" value="Chaperone_DnaK"/>
</dbReference>
<dbReference type="InterPro" id="IPR018181">
    <property type="entry name" value="Heat_shock_70_CS"/>
</dbReference>
<dbReference type="InterPro" id="IPR029047">
    <property type="entry name" value="HSP70_peptide-bd_sf"/>
</dbReference>
<dbReference type="InterPro" id="IPR013126">
    <property type="entry name" value="Hsp_70_fam"/>
</dbReference>
<dbReference type="NCBIfam" id="NF001413">
    <property type="entry name" value="PRK00290.1"/>
    <property type="match status" value="1"/>
</dbReference>
<dbReference type="NCBIfam" id="TIGR02350">
    <property type="entry name" value="prok_dnaK"/>
    <property type="match status" value="1"/>
</dbReference>
<dbReference type="PANTHER" id="PTHR19375">
    <property type="entry name" value="HEAT SHOCK PROTEIN 70KDA"/>
    <property type="match status" value="1"/>
</dbReference>
<dbReference type="Pfam" id="PF00012">
    <property type="entry name" value="HSP70"/>
    <property type="match status" value="1"/>
</dbReference>
<dbReference type="PRINTS" id="PR00301">
    <property type="entry name" value="HEATSHOCK70"/>
</dbReference>
<dbReference type="SUPFAM" id="SSF53067">
    <property type="entry name" value="Actin-like ATPase domain"/>
    <property type="match status" value="2"/>
</dbReference>
<dbReference type="SUPFAM" id="SSF100920">
    <property type="entry name" value="Heat shock protein 70kD (HSP70), peptide-binding domain"/>
    <property type="match status" value="1"/>
</dbReference>
<dbReference type="PROSITE" id="PS00297">
    <property type="entry name" value="HSP70_1"/>
    <property type="match status" value="1"/>
</dbReference>
<dbReference type="PROSITE" id="PS00329">
    <property type="entry name" value="HSP70_2"/>
    <property type="match status" value="1"/>
</dbReference>
<dbReference type="PROSITE" id="PS01036">
    <property type="entry name" value="HSP70_3"/>
    <property type="match status" value="1"/>
</dbReference>
<gene>
    <name type="primary">dnaK</name>
    <name type="ordered locus">Deipr_1906</name>
</gene>
<comment type="function">
    <text evidence="1">Acts as a chaperone.</text>
</comment>
<comment type="induction">
    <text evidence="1">By stress conditions e.g. heat shock (By similarity).</text>
</comment>
<comment type="similarity">
    <text evidence="3">Belongs to the heat shock protein 70 family.</text>
</comment>
<sequence>MAKAVGIDLGTTNSVIAVMEGGRPEVIVNAEGNRTTPSVVAYKGDERLVGQIARRQAALNPQATLFEVKRFIGRRWDEVKDEAARSPFTVKEGPGGSVRIEVDGKDYAPEQVSAEVLRKLVGDASAKLGQKITDAVITVPAYFDNSQREATKQAGEIAGLNVLRVINEPTAAALAYGLERKGDETILVFDLGGGTFDVTILELGDGVFEVKSTSGDTSLGGADFDQRIVDWLAEEFNKEHNFDLRKDKQALQRLIEAAEKAKIELSNASETSISLPFITFDPETRTPLHLERTLSRAKFEELTADLLKRVRQPVEQAMRDAGVSSSDLNEVILVGGSTRIPAVKRIVKDLTGKEPNESVNPDEAVALGAAVQAGIIQGDSNLGDIVLVDVTPLTLGVEVKGGMIAPMITRNTAVPAKKTEIYTTAENNQPGVEINVLQGERPMAADNKSLGRFKLEGIPPMRAGQAQIEVTFDIDANGILNVTAKEKTTGKESSITIENTTTLDKSDVERMVKEAEQNAEADKARKERVEKRNALDQMRVQALQQIDENAAAPQDAKDRLKAVADEAEQAVGSDDDSRIAEVQGRLEEELRNFMTQNSAAAGAQEGAGQPGAAQDQDDVIDADFKPADDNK</sequence>
<organism>
    <name type="scientific">Deinococcus proteolyticus (strain ATCC 35074 / DSM 20540 / JCM 6276 / NBRC 101906 / NCIMB 13154 / VKM Ac-1939 / CCM 2703 / MRP)</name>
    <dbReference type="NCBI Taxonomy" id="693977"/>
    <lineage>
        <taxon>Bacteria</taxon>
        <taxon>Thermotogati</taxon>
        <taxon>Deinococcota</taxon>
        <taxon>Deinococci</taxon>
        <taxon>Deinococcales</taxon>
        <taxon>Deinococcaceae</taxon>
        <taxon>Deinococcus</taxon>
    </lineage>
</organism>
<feature type="chain" id="PRO_0000078456" description="Chaperone protein DnaK">
    <location>
        <begin position="1"/>
        <end position="631"/>
    </location>
</feature>
<feature type="region of interest" description="Disordered" evidence="2">
    <location>
        <begin position="593"/>
        <end position="631"/>
    </location>
</feature>
<feature type="compositionally biased region" description="Low complexity" evidence="2">
    <location>
        <begin position="599"/>
        <end position="614"/>
    </location>
</feature>
<feature type="compositionally biased region" description="Basic and acidic residues" evidence="2">
    <location>
        <begin position="622"/>
        <end position="631"/>
    </location>
</feature>
<feature type="modified residue" description="Phosphothreonine; by autocatalysis" evidence="1">
    <location>
        <position position="195"/>
    </location>
</feature>
<feature type="sequence conflict" description="In Ref. 2; AAB41739." evidence="3" ref="2">
    <original>GD</original>
    <variation>AN</variation>
    <location>
        <begin position="122"/>
        <end position="123"/>
    </location>
</feature>
<feature type="sequence conflict" description="In Ref. 2; AAB41739." evidence="3" ref="2">
    <original>A</original>
    <variation>G</variation>
    <location>
        <position position="366"/>
    </location>
</feature>
<feature type="sequence conflict" description="In Ref. 2; AAB41739." evidence="3" ref="2">
    <original>R</original>
    <variation>P</variation>
    <location>
        <position position="462"/>
    </location>
</feature>
<feature type="sequence conflict" description="In Ref. 2; AAB41739." evidence="3" ref="2">
    <original>A</original>
    <variation>P</variation>
    <location>
        <position position="466"/>
    </location>
</feature>
<feature type="sequence conflict" description="In Ref. 2; AAB41739." evidence="3" ref="2">
    <original>AAPQDAKDRLKAVADEAEQAVGSDDDS</original>
    <variation>VRPKTPRTDSSRGRRSRAGRGQRRRQ</variation>
    <location>
        <begin position="551"/>
        <end position="577"/>
    </location>
</feature>
<feature type="sequence conflict" description="In Ref. 2; AAB41739." evidence="3" ref="2">
    <location>
        <position position="602"/>
    </location>
</feature>